<name>CCME_ECOSE</name>
<keyword id="KW-0997">Cell inner membrane</keyword>
<keyword id="KW-1003">Cell membrane</keyword>
<keyword id="KW-0201">Cytochrome c-type biogenesis</keyword>
<keyword id="KW-0349">Heme</keyword>
<keyword id="KW-0408">Iron</keyword>
<keyword id="KW-0472">Membrane</keyword>
<keyword id="KW-0479">Metal-binding</keyword>
<keyword id="KW-0735">Signal-anchor</keyword>
<keyword id="KW-0812">Transmembrane</keyword>
<keyword id="KW-1133">Transmembrane helix</keyword>
<reference key="1">
    <citation type="journal article" date="2008" name="DNA Res.">
        <title>Complete genome sequence and comparative analysis of the wild-type commensal Escherichia coli strain SE11 isolated from a healthy adult.</title>
        <authorList>
            <person name="Oshima K."/>
            <person name="Toh H."/>
            <person name="Ogura Y."/>
            <person name="Sasamoto H."/>
            <person name="Morita H."/>
            <person name="Park S.-H."/>
            <person name="Ooka T."/>
            <person name="Iyoda S."/>
            <person name="Taylor T.D."/>
            <person name="Hayashi T."/>
            <person name="Itoh K."/>
            <person name="Hattori M."/>
        </authorList>
    </citation>
    <scope>NUCLEOTIDE SEQUENCE [LARGE SCALE GENOMIC DNA]</scope>
    <source>
        <strain>SE11</strain>
    </source>
</reference>
<organism>
    <name type="scientific">Escherichia coli (strain SE11)</name>
    <dbReference type="NCBI Taxonomy" id="409438"/>
    <lineage>
        <taxon>Bacteria</taxon>
        <taxon>Pseudomonadati</taxon>
        <taxon>Pseudomonadota</taxon>
        <taxon>Gammaproteobacteria</taxon>
        <taxon>Enterobacterales</taxon>
        <taxon>Enterobacteriaceae</taxon>
        <taxon>Escherichia</taxon>
    </lineage>
</organism>
<gene>
    <name evidence="1" type="primary">ccmE</name>
    <name evidence="1" type="synonym">cycJ</name>
    <name type="ordered locus">ECSE_2465</name>
</gene>
<dbReference type="EMBL" id="AP009240">
    <property type="protein sequence ID" value="BAG77989.1"/>
    <property type="molecule type" value="Genomic_DNA"/>
</dbReference>
<dbReference type="RefSeq" id="WP_001026418.1">
    <property type="nucleotide sequence ID" value="NC_011415.1"/>
</dbReference>
<dbReference type="SMR" id="B6I195"/>
<dbReference type="GeneID" id="86860369"/>
<dbReference type="KEGG" id="ecy:ECSE_2465"/>
<dbReference type="HOGENOM" id="CLU_079503_1_0_6"/>
<dbReference type="Proteomes" id="UP000008199">
    <property type="component" value="Chromosome"/>
</dbReference>
<dbReference type="GO" id="GO:0005886">
    <property type="term" value="C:plasma membrane"/>
    <property type="evidence" value="ECO:0007669"/>
    <property type="project" value="UniProtKB-SubCell"/>
</dbReference>
<dbReference type="GO" id="GO:0020037">
    <property type="term" value="F:heme binding"/>
    <property type="evidence" value="ECO:0007669"/>
    <property type="project" value="InterPro"/>
</dbReference>
<dbReference type="GO" id="GO:0046872">
    <property type="term" value="F:metal ion binding"/>
    <property type="evidence" value="ECO:0007669"/>
    <property type="project" value="UniProtKB-KW"/>
</dbReference>
<dbReference type="GO" id="GO:0017004">
    <property type="term" value="P:cytochrome complex assembly"/>
    <property type="evidence" value="ECO:0007669"/>
    <property type="project" value="UniProtKB-KW"/>
</dbReference>
<dbReference type="FunFam" id="2.40.50.140:FF:000104">
    <property type="entry name" value="Cytochrome c-type biogenesis protein CcmE"/>
    <property type="match status" value="1"/>
</dbReference>
<dbReference type="Gene3D" id="2.40.50.140">
    <property type="entry name" value="Nucleic acid-binding proteins"/>
    <property type="match status" value="1"/>
</dbReference>
<dbReference type="HAMAP" id="MF_01959">
    <property type="entry name" value="CcmE"/>
    <property type="match status" value="1"/>
</dbReference>
<dbReference type="InterPro" id="IPR004329">
    <property type="entry name" value="CcmE"/>
</dbReference>
<dbReference type="InterPro" id="IPR036127">
    <property type="entry name" value="CcmE-like_sf"/>
</dbReference>
<dbReference type="InterPro" id="IPR012340">
    <property type="entry name" value="NA-bd_OB-fold"/>
</dbReference>
<dbReference type="NCBIfam" id="NF009635">
    <property type="entry name" value="PRK13150.1"/>
    <property type="match status" value="1"/>
</dbReference>
<dbReference type="NCBIfam" id="NF009638">
    <property type="entry name" value="PRK13165.1"/>
    <property type="match status" value="1"/>
</dbReference>
<dbReference type="NCBIfam" id="NF009727">
    <property type="entry name" value="PRK13254.1-1"/>
    <property type="match status" value="1"/>
</dbReference>
<dbReference type="NCBIfam" id="NF009729">
    <property type="entry name" value="PRK13254.1-3"/>
    <property type="match status" value="1"/>
</dbReference>
<dbReference type="PANTHER" id="PTHR34128">
    <property type="entry name" value="CYTOCHROME C-TYPE BIOGENESIS PROTEIN CCME HOMOLOG, MITOCHONDRIAL"/>
    <property type="match status" value="1"/>
</dbReference>
<dbReference type="PANTHER" id="PTHR34128:SF2">
    <property type="entry name" value="CYTOCHROME C-TYPE BIOGENESIS PROTEIN CCME HOMOLOG, MITOCHONDRIAL"/>
    <property type="match status" value="1"/>
</dbReference>
<dbReference type="Pfam" id="PF03100">
    <property type="entry name" value="CcmE"/>
    <property type="match status" value="1"/>
</dbReference>
<dbReference type="SUPFAM" id="SSF82093">
    <property type="entry name" value="Heme chaperone CcmE"/>
    <property type="match status" value="1"/>
</dbReference>
<comment type="function">
    <text evidence="1">Heme chaperone required for the biogenesis of c-type cytochromes. Transiently binds heme delivered by CcmC and transfers the heme to apo-cytochromes in a process facilitated by CcmF and CcmH.</text>
</comment>
<comment type="subcellular location">
    <subcellularLocation>
        <location evidence="1">Cell inner membrane</location>
        <topology evidence="1">Single-pass type II membrane protein</topology>
        <orientation evidence="1">Periplasmic side</orientation>
    </subcellularLocation>
</comment>
<comment type="similarity">
    <text evidence="1">Belongs to the CcmE/CycJ family.</text>
</comment>
<accession>B6I195</accession>
<feature type="chain" id="PRO_1000189021" description="Cytochrome c-type biogenesis protein CcmE">
    <location>
        <begin position="1"/>
        <end position="159"/>
    </location>
</feature>
<feature type="topological domain" description="Cytoplasmic" evidence="1">
    <location>
        <begin position="1"/>
        <end position="8"/>
    </location>
</feature>
<feature type="transmembrane region" description="Helical; Signal-anchor for type II membrane protein" evidence="1">
    <location>
        <begin position="9"/>
        <end position="29"/>
    </location>
</feature>
<feature type="topological domain" description="Periplasmic" evidence="1">
    <location>
        <begin position="30"/>
        <end position="159"/>
    </location>
</feature>
<feature type="region of interest" description="Disordered" evidence="2">
    <location>
        <begin position="132"/>
        <end position="159"/>
    </location>
</feature>
<feature type="compositionally biased region" description="Basic and acidic residues" evidence="2">
    <location>
        <begin position="132"/>
        <end position="147"/>
    </location>
</feature>
<feature type="binding site" description="covalent" evidence="1">
    <location>
        <position position="130"/>
    </location>
    <ligand>
        <name>heme</name>
        <dbReference type="ChEBI" id="CHEBI:30413"/>
    </ligand>
</feature>
<feature type="binding site" description="axial binding residue" evidence="1">
    <location>
        <position position="134"/>
    </location>
    <ligand>
        <name>heme</name>
        <dbReference type="ChEBI" id="CHEBI:30413"/>
    </ligand>
    <ligandPart>
        <name>Fe</name>
        <dbReference type="ChEBI" id="CHEBI:18248"/>
    </ligandPart>
</feature>
<proteinExistence type="inferred from homology"/>
<evidence type="ECO:0000255" key="1">
    <source>
        <dbReference type="HAMAP-Rule" id="MF_01959"/>
    </source>
</evidence>
<evidence type="ECO:0000256" key="2">
    <source>
        <dbReference type="SAM" id="MobiDB-lite"/>
    </source>
</evidence>
<sequence>MNIRRKNRLWIACAVLAGLALTIGLVLYALRSNIDLFYTPGEILYGKRETQQMPEVGQRLRVGGMVMPGSVQRDPNSLKVTFTIYDAEGSVDVSYEGILPDLFREGQGVVVQGELEKGNHILAKEVLAKHDENYTPPEVEKAMEANHRRPASVYKDPAS</sequence>
<protein>
    <recommendedName>
        <fullName evidence="1">Cytochrome c-type biogenesis protein CcmE</fullName>
    </recommendedName>
    <alternativeName>
        <fullName evidence="1">Cytochrome c maturation protein E</fullName>
    </alternativeName>
    <alternativeName>
        <fullName evidence="1">Heme chaperone CcmE</fullName>
    </alternativeName>
</protein>